<name>CHEB_LAWIP</name>
<protein>
    <recommendedName>
        <fullName evidence="1">Protein-glutamate methylesterase/protein-glutamine glutaminase</fullName>
        <ecNumber evidence="1">3.1.1.61</ecNumber>
        <ecNumber evidence="1">3.5.1.44</ecNumber>
    </recommendedName>
</protein>
<gene>
    <name evidence="1" type="primary">cheB</name>
    <name type="ordered locus">LI1137</name>
</gene>
<organism>
    <name type="scientific">Lawsonia intracellularis (strain PHE/MN1-00)</name>
    <dbReference type="NCBI Taxonomy" id="363253"/>
    <lineage>
        <taxon>Bacteria</taxon>
        <taxon>Pseudomonadati</taxon>
        <taxon>Thermodesulfobacteriota</taxon>
        <taxon>Desulfovibrionia</taxon>
        <taxon>Desulfovibrionales</taxon>
        <taxon>Desulfovibrionaceae</taxon>
        <taxon>Lawsonia</taxon>
    </lineage>
</organism>
<evidence type="ECO:0000255" key="1">
    <source>
        <dbReference type="HAMAP-Rule" id="MF_00099"/>
    </source>
</evidence>
<feature type="chain" id="PRO_0000264285" description="Protein-glutamate methylesterase/protein-glutamine glutaminase">
    <location>
        <begin position="1"/>
        <end position="357"/>
    </location>
</feature>
<feature type="domain" description="Response regulatory" evidence="1">
    <location>
        <begin position="3"/>
        <end position="120"/>
    </location>
</feature>
<feature type="domain" description="CheB-type methylesterase" evidence="1">
    <location>
        <begin position="165"/>
        <end position="357"/>
    </location>
</feature>
<feature type="active site" evidence="1">
    <location>
        <position position="177"/>
    </location>
</feature>
<feature type="active site" evidence="1">
    <location>
        <position position="204"/>
    </location>
</feature>
<feature type="active site" evidence="1">
    <location>
        <position position="300"/>
    </location>
</feature>
<feature type="modified residue" description="4-aspartylphosphate" evidence="1">
    <location>
        <position position="54"/>
    </location>
</feature>
<keyword id="KW-0145">Chemotaxis</keyword>
<keyword id="KW-0963">Cytoplasm</keyword>
<keyword id="KW-0378">Hydrolase</keyword>
<keyword id="KW-0597">Phosphoprotein</keyword>
<keyword id="KW-1185">Reference proteome</keyword>
<comment type="function">
    <text evidence="1">Involved in chemotaxis. Part of a chemotaxis signal transduction system that modulates chemotaxis in response to various stimuli. Catalyzes the demethylation of specific methylglutamate residues introduced into the chemoreceptors (methyl-accepting chemotaxis proteins or MCP) by CheR. Also mediates the irreversible deamidation of specific glutamine residues to glutamic acid.</text>
</comment>
<comment type="catalytic activity">
    <reaction evidence="1">
        <text>[protein]-L-glutamate 5-O-methyl ester + H2O = L-glutamyl-[protein] + methanol + H(+)</text>
        <dbReference type="Rhea" id="RHEA:23236"/>
        <dbReference type="Rhea" id="RHEA-COMP:10208"/>
        <dbReference type="Rhea" id="RHEA-COMP:10311"/>
        <dbReference type="ChEBI" id="CHEBI:15377"/>
        <dbReference type="ChEBI" id="CHEBI:15378"/>
        <dbReference type="ChEBI" id="CHEBI:17790"/>
        <dbReference type="ChEBI" id="CHEBI:29973"/>
        <dbReference type="ChEBI" id="CHEBI:82795"/>
        <dbReference type="EC" id="3.1.1.61"/>
    </reaction>
</comment>
<comment type="catalytic activity">
    <reaction evidence="1">
        <text>L-glutaminyl-[protein] + H2O = L-glutamyl-[protein] + NH4(+)</text>
        <dbReference type="Rhea" id="RHEA:16441"/>
        <dbReference type="Rhea" id="RHEA-COMP:10207"/>
        <dbReference type="Rhea" id="RHEA-COMP:10208"/>
        <dbReference type="ChEBI" id="CHEBI:15377"/>
        <dbReference type="ChEBI" id="CHEBI:28938"/>
        <dbReference type="ChEBI" id="CHEBI:29973"/>
        <dbReference type="ChEBI" id="CHEBI:30011"/>
        <dbReference type="EC" id="3.5.1.44"/>
    </reaction>
</comment>
<comment type="subcellular location">
    <subcellularLocation>
        <location evidence="1">Cytoplasm</location>
    </subcellularLocation>
</comment>
<comment type="domain">
    <text evidence="1">Contains a C-terminal catalytic domain, and an N-terminal region which modulates catalytic activity.</text>
</comment>
<comment type="PTM">
    <text evidence="1">Phosphorylated by CheA. Phosphorylation of the N-terminal regulatory domain activates the methylesterase activity.</text>
</comment>
<comment type="similarity">
    <text evidence="1">Belongs to the CheB family.</text>
</comment>
<reference key="1">
    <citation type="submission" date="2005-11" db="EMBL/GenBank/DDBJ databases">
        <title>The complete genome sequence of Lawsonia intracellularis: the causative agent of proliferative enteropathy.</title>
        <authorList>
            <person name="Kaur K."/>
            <person name="Zhang Q."/>
            <person name="Beckler D."/>
            <person name="Munir S."/>
            <person name="Li L."/>
            <person name="Kinsley K."/>
            <person name="Herron L."/>
            <person name="Peterson A."/>
            <person name="May B."/>
            <person name="Singh S."/>
            <person name="Gebhart C."/>
            <person name="Kapur V."/>
        </authorList>
    </citation>
    <scope>NUCLEOTIDE SEQUENCE [LARGE SCALE GENOMIC DNA]</scope>
    <source>
        <strain>PHE/MN1-00</strain>
    </source>
</reference>
<dbReference type="EC" id="3.1.1.61" evidence="1"/>
<dbReference type="EC" id="3.5.1.44" evidence="1"/>
<dbReference type="EMBL" id="AM180252">
    <property type="protein sequence ID" value="CAJ55191.1"/>
    <property type="molecule type" value="Genomic_DNA"/>
</dbReference>
<dbReference type="RefSeq" id="WP_011527220.1">
    <property type="nucleotide sequence ID" value="NC_008011.1"/>
</dbReference>
<dbReference type="SMR" id="Q1MP86"/>
<dbReference type="STRING" id="363253.LI1137"/>
<dbReference type="KEGG" id="lip:LI1137"/>
<dbReference type="eggNOG" id="COG2201">
    <property type="taxonomic scope" value="Bacteria"/>
</dbReference>
<dbReference type="HOGENOM" id="CLU_000445_51_0_7"/>
<dbReference type="OrthoDB" id="9793421at2"/>
<dbReference type="Proteomes" id="UP000002430">
    <property type="component" value="Chromosome"/>
</dbReference>
<dbReference type="GO" id="GO:0005737">
    <property type="term" value="C:cytoplasm"/>
    <property type="evidence" value="ECO:0007669"/>
    <property type="project" value="UniProtKB-SubCell"/>
</dbReference>
<dbReference type="GO" id="GO:0000156">
    <property type="term" value="F:phosphorelay response regulator activity"/>
    <property type="evidence" value="ECO:0007669"/>
    <property type="project" value="InterPro"/>
</dbReference>
<dbReference type="GO" id="GO:0008984">
    <property type="term" value="F:protein-glutamate methylesterase activity"/>
    <property type="evidence" value="ECO:0007669"/>
    <property type="project" value="UniProtKB-UniRule"/>
</dbReference>
<dbReference type="GO" id="GO:0050568">
    <property type="term" value="F:protein-glutamine glutaminase activity"/>
    <property type="evidence" value="ECO:0007669"/>
    <property type="project" value="UniProtKB-UniRule"/>
</dbReference>
<dbReference type="GO" id="GO:0006935">
    <property type="term" value="P:chemotaxis"/>
    <property type="evidence" value="ECO:0007669"/>
    <property type="project" value="UniProtKB-UniRule"/>
</dbReference>
<dbReference type="CDD" id="cd16432">
    <property type="entry name" value="CheB_Rec"/>
    <property type="match status" value="1"/>
</dbReference>
<dbReference type="CDD" id="cd17541">
    <property type="entry name" value="REC_CheB-like"/>
    <property type="match status" value="1"/>
</dbReference>
<dbReference type="Gene3D" id="3.40.50.2300">
    <property type="match status" value="1"/>
</dbReference>
<dbReference type="Gene3D" id="3.40.50.180">
    <property type="entry name" value="Methylesterase CheB, C-terminal domain"/>
    <property type="match status" value="1"/>
</dbReference>
<dbReference type="HAMAP" id="MF_00099">
    <property type="entry name" value="CheB_chemtxs"/>
    <property type="match status" value="1"/>
</dbReference>
<dbReference type="InterPro" id="IPR008248">
    <property type="entry name" value="CheB-like"/>
</dbReference>
<dbReference type="InterPro" id="IPR035909">
    <property type="entry name" value="CheB_C"/>
</dbReference>
<dbReference type="InterPro" id="IPR011006">
    <property type="entry name" value="CheY-like_superfamily"/>
</dbReference>
<dbReference type="InterPro" id="IPR000673">
    <property type="entry name" value="Sig_transdc_resp-reg_Me-estase"/>
</dbReference>
<dbReference type="InterPro" id="IPR001789">
    <property type="entry name" value="Sig_transdc_resp-reg_receiver"/>
</dbReference>
<dbReference type="NCBIfam" id="NF001965">
    <property type="entry name" value="PRK00742.1"/>
    <property type="match status" value="1"/>
</dbReference>
<dbReference type="NCBIfam" id="NF009206">
    <property type="entry name" value="PRK12555.1"/>
    <property type="match status" value="1"/>
</dbReference>
<dbReference type="PANTHER" id="PTHR42872">
    <property type="entry name" value="PROTEIN-GLUTAMATE METHYLESTERASE/PROTEIN-GLUTAMINE GLUTAMINASE"/>
    <property type="match status" value="1"/>
</dbReference>
<dbReference type="PANTHER" id="PTHR42872:SF3">
    <property type="entry name" value="PROTEIN-GLUTAMATE METHYLESTERASE_PROTEIN-GLUTAMINE GLUTAMINASE 1"/>
    <property type="match status" value="1"/>
</dbReference>
<dbReference type="Pfam" id="PF01339">
    <property type="entry name" value="CheB_methylest"/>
    <property type="match status" value="1"/>
</dbReference>
<dbReference type="Pfam" id="PF00072">
    <property type="entry name" value="Response_reg"/>
    <property type="match status" value="1"/>
</dbReference>
<dbReference type="PIRSF" id="PIRSF000876">
    <property type="entry name" value="RR_chemtxs_CheB"/>
    <property type="match status" value="1"/>
</dbReference>
<dbReference type="SMART" id="SM00448">
    <property type="entry name" value="REC"/>
    <property type="match status" value="1"/>
</dbReference>
<dbReference type="SUPFAM" id="SSF52172">
    <property type="entry name" value="CheY-like"/>
    <property type="match status" value="1"/>
</dbReference>
<dbReference type="SUPFAM" id="SSF52738">
    <property type="entry name" value="Methylesterase CheB, C-terminal domain"/>
    <property type="match status" value="1"/>
</dbReference>
<dbReference type="PROSITE" id="PS50122">
    <property type="entry name" value="CHEB"/>
    <property type="match status" value="1"/>
</dbReference>
<dbReference type="PROSITE" id="PS50110">
    <property type="entry name" value="RESPONSE_REGULATORY"/>
    <property type="match status" value="1"/>
</dbReference>
<accession>Q1MP86</accession>
<sequence length="357" mass="38202">MTRVIVVDDSAFFRSSITKMLTQDSEIEVIGVAKDGIEGLEKIKNLKPDVVTMDIEMPKLDGISTLKIIMDEMPLPVIMVSSLTKEGAEATLKALEFGAVDFIPKYPGNSLASMDLAALSSDLCTKVKAVAARAKRFPLKRIRKDKVPIISPVKKDFFTSPNHSERSRRDIIAIGVSTGGPPAVQKVLSELPETFPACILIAQHMPAAFTKPFAERLNSMCKISVKEAEHGNPIKNGIAYVCPGGRHLRLDLKGALPQISVVSEPSTALYKPSANVLMESVGKSMGGRSVGVIMTGMGSDGVEGMRVLKSKGGFVIAQSEASCVVYGMPKAIVDGGLADEVVDLDNIAERVASALYK</sequence>
<proteinExistence type="inferred from homology"/>